<feature type="chain" id="PRO_0000147072" description="Phosphoenolpyruvate-protein phosphotransferase">
    <location>
        <begin position="1"/>
        <end position="574"/>
    </location>
</feature>
<feature type="active site" description="Tele-phosphohistidine intermediate" evidence="1">
    <location>
        <position position="190"/>
    </location>
</feature>
<feature type="active site" description="Proton donor" evidence="1">
    <location>
        <position position="503"/>
    </location>
</feature>
<feature type="binding site" evidence="2">
    <location>
        <position position="297"/>
    </location>
    <ligand>
        <name>phosphoenolpyruvate</name>
        <dbReference type="ChEBI" id="CHEBI:58702"/>
    </ligand>
</feature>
<feature type="binding site" evidence="1">
    <location>
        <position position="333"/>
    </location>
    <ligand>
        <name>phosphoenolpyruvate</name>
        <dbReference type="ChEBI" id="CHEBI:58702"/>
    </ligand>
</feature>
<feature type="binding site" evidence="1">
    <location>
        <position position="432"/>
    </location>
    <ligand>
        <name>Mg(2+)</name>
        <dbReference type="ChEBI" id="CHEBI:18420"/>
    </ligand>
</feature>
<feature type="binding site" evidence="1">
    <location>
        <begin position="455"/>
        <end position="456"/>
    </location>
    <ligand>
        <name>phosphoenolpyruvate</name>
        <dbReference type="ChEBI" id="CHEBI:58702"/>
    </ligand>
</feature>
<feature type="binding site" evidence="1">
    <location>
        <position position="456"/>
    </location>
    <ligand>
        <name>Mg(2+)</name>
        <dbReference type="ChEBI" id="CHEBI:18420"/>
    </ligand>
</feature>
<feature type="binding site" evidence="2">
    <location>
        <position position="466"/>
    </location>
    <ligand>
        <name>phosphoenolpyruvate</name>
        <dbReference type="ChEBI" id="CHEBI:58702"/>
    </ligand>
</feature>
<dbReference type="EC" id="2.7.3.9" evidence="1"/>
<dbReference type="EMBL" id="U82366">
    <property type="protein sequence ID" value="AAC45391.1"/>
    <property type="molecule type" value="Genomic_DNA"/>
</dbReference>
<dbReference type="SMR" id="O07126"/>
<dbReference type="OMA" id="RMFANDH"/>
<dbReference type="GO" id="GO:0005737">
    <property type="term" value="C:cytoplasm"/>
    <property type="evidence" value="ECO:0007669"/>
    <property type="project" value="UniProtKB-SubCell"/>
</dbReference>
<dbReference type="GO" id="GO:0016301">
    <property type="term" value="F:kinase activity"/>
    <property type="evidence" value="ECO:0007669"/>
    <property type="project" value="UniProtKB-KW"/>
</dbReference>
<dbReference type="GO" id="GO:0046872">
    <property type="term" value="F:metal ion binding"/>
    <property type="evidence" value="ECO:0007669"/>
    <property type="project" value="UniProtKB-KW"/>
</dbReference>
<dbReference type="GO" id="GO:0008965">
    <property type="term" value="F:phosphoenolpyruvate-protein phosphotransferase activity"/>
    <property type="evidence" value="ECO:0007669"/>
    <property type="project" value="UniProtKB-EC"/>
</dbReference>
<dbReference type="GO" id="GO:0009401">
    <property type="term" value="P:phosphoenolpyruvate-dependent sugar phosphotransferase system"/>
    <property type="evidence" value="ECO:0007669"/>
    <property type="project" value="UniProtKB-KW"/>
</dbReference>
<dbReference type="FunFam" id="3.20.20.60:FF:000007">
    <property type="entry name" value="Phosphoenolpyruvate-protein phosphotransferase"/>
    <property type="match status" value="1"/>
</dbReference>
<dbReference type="Gene3D" id="3.20.20.60">
    <property type="entry name" value="Phosphoenolpyruvate-binding domains"/>
    <property type="match status" value="1"/>
</dbReference>
<dbReference type="Gene3D" id="3.50.30.10">
    <property type="entry name" value="Phosphohistidine domain"/>
    <property type="match status" value="1"/>
</dbReference>
<dbReference type="Gene3D" id="1.10.274.10">
    <property type="entry name" value="PtsI, HPr-binding domain"/>
    <property type="match status" value="1"/>
</dbReference>
<dbReference type="InterPro" id="IPR008279">
    <property type="entry name" value="PEP-util_enz_mobile_dom"/>
</dbReference>
<dbReference type="InterPro" id="IPR050499">
    <property type="entry name" value="PEP-utilizing_PTS_enzyme"/>
</dbReference>
<dbReference type="InterPro" id="IPR018274">
    <property type="entry name" value="PEP_util_AS"/>
</dbReference>
<dbReference type="InterPro" id="IPR000121">
    <property type="entry name" value="PEP_util_C"/>
</dbReference>
<dbReference type="InterPro" id="IPR023151">
    <property type="entry name" value="PEP_util_CS"/>
</dbReference>
<dbReference type="InterPro" id="IPR036637">
    <property type="entry name" value="Phosphohistidine_dom_sf"/>
</dbReference>
<dbReference type="InterPro" id="IPR024692">
    <property type="entry name" value="PTS_EI"/>
</dbReference>
<dbReference type="InterPro" id="IPR006318">
    <property type="entry name" value="PTS_EI-like"/>
</dbReference>
<dbReference type="InterPro" id="IPR008731">
    <property type="entry name" value="PTS_EIN"/>
</dbReference>
<dbReference type="InterPro" id="IPR036618">
    <property type="entry name" value="PtsI_HPr-bd_sf"/>
</dbReference>
<dbReference type="InterPro" id="IPR015813">
    <property type="entry name" value="Pyrv/PenolPyrv_kinase-like_dom"/>
</dbReference>
<dbReference type="InterPro" id="IPR040442">
    <property type="entry name" value="Pyrv_kinase-like_dom_sf"/>
</dbReference>
<dbReference type="NCBIfam" id="TIGR01417">
    <property type="entry name" value="PTS_I_fam"/>
    <property type="match status" value="1"/>
</dbReference>
<dbReference type="PANTHER" id="PTHR46244">
    <property type="entry name" value="PHOSPHOENOLPYRUVATE-PROTEIN PHOSPHOTRANSFERASE"/>
    <property type="match status" value="1"/>
</dbReference>
<dbReference type="PANTHER" id="PTHR46244:SF3">
    <property type="entry name" value="PHOSPHOENOLPYRUVATE-PROTEIN PHOSPHOTRANSFERASE"/>
    <property type="match status" value="1"/>
</dbReference>
<dbReference type="Pfam" id="PF05524">
    <property type="entry name" value="PEP-utilisers_N"/>
    <property type="match status" value="1"/>
</dbReference>
<dbReference type="Pfam" id="PF00391">
    <property type="entry name" value="PEP-utilizers"/>
    <property type="match status" value="1"/>
</dbReference>
<dbReference type="Pfam" id="PF02896">
    <property type="entry name" value="PEP-utilizers_C"/>
    <property type="match status" value="1"/>
</dbReference>
<dbReference type="PIRSF" id="PIRSF000732">
    <property type="entry name" value="PTS_enzyme_I"/>
    <property type="match status" value="1"/>
</dbReference>
<dbReference type="PRINTS" id="PR01736">
    <property type="entry name" value="PHPHTRNFRASE"/>
</dbReference>
<dbReference type="SUPFAM" id="SSF47831">
    <property type="entry name" value="Enzyme I of the PEP:sugar phosphotransferase system HPr-binding (sub)domain"/>
    <property type="match status" value="1"/>
</dbReference>
<dbReference type="SUPFAM" id="SSF51621">
    <property type="entry name" value="Phosphoenolpyruvate/pyruvate domain"/>
    <property type="match status" value="1"/>
</dbReference>
<dbReference type="SUPFAM" id="SSF52009">
    <property type="entry name" value="Phosphohistidine domain"/>
    <property type="match status" value="1"/>
</dbReference>
<dbReference type="PROSITE" id="PS00742">
    <property type="entry name" value="PEP_ENZYMES_2"/>
    <property type="match status" value="1"/>
</dbReference>
<dbReference type="PROSITE" id="PS00370">
    <property type="entry name" value="PEP_ENZYMES_PHOS_SITE"/>
    <property type="match status" value="1"/>
</dbReference>
<keyword id="KW-0963">Cytoplasm</keyword>
<keyword id="KW-0418">Kinase</keyword>
<keyword id="KW-0460">Magnesium</keyword>
<keyword id="KW-0479">Metal-binding</keyword>
<keyword id="KW-0598">Phosphotransferase system</keyword>
<keyword id="KW-0762">Sugar transport</keyword>
<keyword id="KW-0808">Transferase</keyword>
<keyword id="KW-0813">Transport</keyword>
<name>PT1_LATSK</name>
<reference key="1">
    <citation type="journal article" date="1997" name="Appl. Environ. Microbiol.">
        <title>Molecular cloning and analysis of the ptsHI operon in Lactobacillus sake.</title>
        <authorList>
            <person name="Stentz R."/>
            <person name="Lauret R."/>
            <person name="Ehrlich S.D."/>
            <person name="Morel-Deville F."/>
            <person name="Zagorec M."/>
        </authorList>
    </citation>
    <scope>NUCLEOTIDE SEQUENCE [GENOMIC DNA]</scope>
    <source>
        <strain>160*1</strain>
    </source>
</reference>
<proteinExistence type="inferred from homology"/>
<comment type="function">
    <text evidence="1">General (non sugar-specific) component of the phosphoenolpyruvate-dependent sugar phosphotransferase system (sugar PTS). This major carbohydrate active-transport system catalyzes the phosphorylation of incoming sugar substrates concomitantly with their translocation across the cell membrane. Enzyme I transfers the phosphoryl group from phosphoenolpyruvate (PEP) to the phosphoryl carrier protein (HPr).</text>
</comment>
<comment type="catalytic activity">
    <reaction evidence="1">
        <text>L-histidyl-[protein] + phosphoenolpyruvate = N(pros)-phospho-L-histidyl-[protein] + pyruvate</text>
        <dbReference type="Rhea" id="RHEA:23880"/>
        <dbReference type="Rhea" id="RHEA-COMP:9745"/>
        <dbReference type="Rhea" id="RHEA-COMP:9746"/>
        <dbReference type="ChEBI" id="CHEBI:15361"/>
        <dbReference type="ChEBI" id="CHEBI:29979"/>
        <dbReference type="ChEBI" id="CHEBI:58702"/>
        <dbReference type="ChEBI" id="CHEBI:64837"/>
        <dbReference type="EC" id="2.7.3.9"/>
    </reaction>
</comment>
<comment type="cofactor">
    <cofactor evidence="1">
        <name>Mg(2+)</name>
        <dbReference type="ChEBI" id="CHEBI:18420"/>
    </cofactor>
</comment>
<comment type="subunit">
    <text evidence="1">Homodimer.</text>
</comment>
<comment type="subcellular location">
    <subcellularLocation>
        <location evidence="3">Cytoplasm</location>
    </subcellularLocation>
</comment>
<comment type="domain">
    <text evidence="1">The N-terminal domain contains the HPr binding site, the central domain the pyrophosphate/phosphate carrier histidine, and the C-terminal domain the pyruvate binding site.</text>
</comment>
<comment type="miscellaneous">
    <text evidence="1">The reaction takes place in three steps, mediated by a phosphocarrier histidine residue located on the surface of the central domain. The two first partial reactions are catalyzed at an active site located on the N-terminal domain, and the third partial reaction is catalyzed at an active site located on the C-terminal domain. For catalytic turnover, the central domain swivels from the concave surface of the N-terminal domain to that of the C-terminal domain.</text>
</comment>
<comment type="similarity">
    <text evidence="3">Belongs to the PEP-utilizing enzyme family.</text>
</comment>
<organism>
    <name type="scientific">Latilactobacillus sakei</name>
    <name type="common">Lactobacillus sakei</name>
    <dbReference type="NCBI Taxonomy" id="1599"/>
    <lineage>
        <taxon>Bacteria</taxon>
        <taxon>Bacillati</taxon>
        <taxon>Bacillota</taxon>
        <taxon>Bacilli</taxon>
        <taxon>Lactobacillales</taxon>
        <taxon>Lactobacillaceae</taxon>
        <taxon>Latilactobacillus</taxon>
    </lineage>
</organism>
<sequence>MTKLRGIAASDGIATAKAYMLVQPDLSFSKSTISDSEKEINRLHKALQDSTSDLETIRKIAAESLGEEEAQVFDAHMMILADPEFTGAIEGKINDDKVNAEQALKEVADLFVATFESMTNNAYMQERAADIKDVTKRVLSHLLGVTLPNPALIDEEVIVIAHDLTPSDTAQLNGKFVKAFVTDVGGRTSHSAIMARSLEIPAIVGTETVTQDVKAGDLLIVDGINGDVVLDPTDADIAEYDVKAQAFADQKAEWEKLKNEKSVTKDGKTFTVAANIGTPKDLAGVLENGSEAIGLYRTEFLYMDSAELPSEDDQFEAYKSVLEGMDGKPVVVRTMDIGGDKKLPYLPLPEEMNPFLGYRAIRISLDRDDIFRTQLRALLRASNYGKLRIMFPMIATVAEFRQAKGILEDEKAKLIAAGQTVSDDLQVGMMVEIPASAVLANQFAKEVDFFSIGTNDLIQYTMAADRMNERVSYLYQPYNPAILRLIKNVIDASHKEGKWTGMCGEAAGDSIMAPLLVGMGLDEFSMSATSVLRVRSLMKRLDTTELTDLVETAVNVNTSNEENQKLVEDFMKDR</sequence>
<gene>
    <name type="primary">ptsI</name>
</gene>
<evidence type="ECO:0000250" key="1">
    <source>
        <dbReference type="UniProtKB" id="P08839"/>
    </source>
</evidence>
<evidence type="ECO:0000250" key="2">
    <source>
        <dbReference type="UniProtKB" id="P23533"/>
    </source>
</evidence>
<evidence type="ECO:0000305" key="3"/>
<accession>O07126</accession>
<protein>
    <recommendedName>
        <fullName evidence="1">Phosphoenolpyruvate-protein phosphotransferase</fullName>
        <ecNumber evidence="1">2.7.3.9</ecNumber>
    </recommendedName>
    <alternativeName>
        <fullName evidence="1">Phosphotransferase system, enzyme I</fullName>
    </alternativeName>
</protein>